<accession>Q04G65</accession>
<protein>
    <recommendedName>
        <fullName evidence="1">Adenylate kinase</fullName>
        <shortName evidence="1">AK</shortName>
        <ecNumber evidence="1">2.7.4.3</ecNumber>
    </recommendedName>
    <alternativeName>
        <fullName evidence="1">ATP-AMP transphosphorylase</fullName>
    </alternativeName>
    <alternativeName>
        <fullName evidence="1">ATP:AMP phosphotransferase</fullName>
    </alternativeName>
    <alternativeName>
        <fullName evidence="1">Adenylate monophosphate kinase</fullName>
    </alternativeName>
</protein>
<organism>
    <name type="scientific">Oenococcus oeni (strain ATCC BAA-331 / PSU-1)</name>
    <dbReference type="NCBI Taxonomy" id="203123"/>
    <lineage>
        <taxon>Bacteria</taxon>
        <taxon>Bacillati</taxon>
        <taxon>Bacillota</taxon>
        <taxon>Bacilli</taxon>
        <taxon>Lactobacillales</taxon>
        <taxon>Lactobacillaceae</taxon>
        <taxon>Oenococcus</taxon>
    </lineage>
</organism>
<feature type="chain" id="PRO_1000078282" description="Adenylate kinase">
    <location>
        <begin position="1"/>
        <end position="188"/>
    </location>
</feature>
<feature type="region of interest" description="NMP" evidence="1">
    <location>
        <begin position="32"/>
        <end position="61"/>
    </location>
</feature>
<feature type="region of interest" description="LID" evidence="1">
    <location>
        <begin position="130"/>
        <end position="136"/>
    </location>
</feature>
<feature type="binding site" evidence="1">
    <location>
        <begin position="12"/>
        <end position="17"/>
    </location>
    <ligand>
        <name>ATP</name>
        <dbReference type="ChEBI" id="CHEBI:30616"/>
    </ligand>
</feature>
<feature type="binding site" evidence="1">
    <location>
        <position position="33"/>
    </location>
    <ligand>
        <name>AMP</name>
        <dbReference type="ChEBI" id="CHEBI:456215"/>
    </ligand>
</feature>
<feature type="binding site" evidence="1">
    <location>
        <position position="38"/>
    </location>
    <ligand>
        <name>AMP</name>
        <dbReference type="ChEBI" id="CHEBI:456215"/>
    </ligand>
</feature>
<feature type="binding site" evidence="1">
    <location>
        <begin position="59"/>
        <end position="61"/>
    </location>
    <ligand>
        <name>AMP</name>
        <dbReference type="ChEBI" id="CHEBI:456215"/>
    </ligand>
</feature>
<feature type="binding site" evidence="1">
    <location>
        <begin position="89"/>
        <end position="92"/>
    </location>
    <ligand>
        <name>AMP</name>
        <dbReference type="ChEBI" id="CHEBI:456215"/>
    </ligand>
</feature>
<feature type="binding site" evidence="1">
    <location>
        <position position="96"/>
    </location>
    <ligand>
        <name>AMP</name>
        <dbReference type="ChEBI" id="CHEBI:456215"/>
    </ligand>
</feature>
<feature type="binding site" evidence="1">
    <location>
        <position position="131"/>
    </location>
    <ligand>
        <name>ATP</name>
        <dbReference type="ChEBI" id="CHEBI:30616"/>
    </ligand>
</feature>
<feature type="binding site" evidence="1">
    <location>
        <position position="133"/>
    </location>
    <ligand>
        <name>AMP</name>
        <dbReference type="ChEBI" id="CHEBI:456215"/>
    </ligand>
</feature>
<feature type="binding site" evidence="1">
    <location>
        <position position="144"/>
    </location>
    <ligand>
        <name>AMP</name>
        <dbReference type="ChEBI" id="CHEBI:456215"/>
    </ligand>
</feature>
<feature type="binding site" evidence="1">
    <location>
        <position position="172"/>
    </location>
    <ligand>
        <name>ATP</name>
        <dbReference type="ChEBI" id="CHEBI:30616"/>
    </ligand>
</feature>
<keyword id="KW-0067">ATP-binding</keyword>
<keyword id="KW-0963">Cytoplasm</keyword>
<keyword id="KW-0418">Kinase</keyword>
<keyword id="KW-0545">Nucleotide biosynthesis</keyword>
<keyword id="KW-0547">Nucleotide-binding</keyword>
<keyword id="KW-1185">Reference proteome</keyword>
<keyword id="KW-0808">Transferase</keyword>
<reference key="1">
    <citation type="journal article" date="2006" name="Proc. Natl. Acad. Sci. U.S.A.">
        <title>Comparative genomics of the lactic acid bacteria.</title>
        <authorList>
            <person name="Makarova K.S."/>
            <person name="Slesarev A."/>
            <person name="Wolf Y.I."/>
            <person name="Sorokin A."/>
            <person name="Mirkin B."/>
            <person name="Koonin E.V."/>
            <person name="Pavlov A."/>
            <person name="Pavlova N."/>
            <person name="Karamychev V."/>
            <person name="Polouchine N."/>
            <person name="Shakhova V."/>
            <person name="Grigoriev I."/>
            <person name="Lou Y."/>
            <person name="Rohksar D."/>
            <person name="Lucas S."/>
            <person name="Huang K."/>
            <person name="Goodstein D.M."/>
            <person name="Hawkins T."/>
            <person name="Plengvidhya V."/>
            <person name="Welker D."/>
            <person name="Hughes J."/>
            <person name="Goh Y."/>
            <person name="Benson A."/>
            <person name="Baldwin K."/>
            <person name="Lee J.-H."/>
            <person name="Diaz-Muniz I."/>
            <person name="Dosti B."/>
            <person name="Smeianov V."/>
            <person name="Wechter W."/>
            <person name="Barabote R."/>
            <person name="Lorca G."/>
            <person name="Altermann E."/>
            <person name="Barrangou R."/>
            <person name="Ganesan B."/>
            <person name="Xie Y."/>
            <person name="Rawsthorne H."/>
            <person name="Tamir D."/>
            <person name="Parker C."/>
            <person name="Breidt F."/>
            <person name="Broadbent J.R."/>
            <person name="Hutkins R."/>
            <person name="O'Sullivan D."/>
            <person name="Steele J."/>
            <person name="Unlu G."/>
            <person name="Saier M.H. Jr."/>
            <person name="Klaenhammer T."/>
            <person name="Richardson P."/>
            <person name="Kozyavkin S."/>
            <person name="Weimer B.C."/>
            <person name="Mills D.A."/>
        </authorList>
    </citation>
    <scope>NUCLEOTIDE SEQUENCE [LARGE SCALE GENOMIC DNA]</scope>
    <source>
        <strain>ATCC BAA-331 / PSU-1</strain>
    </source>
</reference>
<comment type="function">
    <text evidence="1">Catalyzes the reversible transfer of the terminal phosphate group between ATP and AMP. Plays an important role in cellular energy homeostasis and in adenine nucleotide metabolism.</text>
</comment>
<comment type="catalytic activity">
    <reaction evidence="1">
        <text>AMP + ATP = 2 ADP</text>
        <dbReference type="Rhea" id="RHEA:12973"/>
        <dbReference type="ChEBI" id="CHEBI:30616"/>
        <dbReference type="ChEBI" id="CHEBI:456215"/>
        <dbReference type="ChEBI" id="CHEBI:456216"/>
        <dbReference type="EC" id="2.7.4.3"/>
    </reaction>
</comment>
<comment type="pathway">
    <text evidence="1">Purine metabolism; AMP biosynthesis via salvage pathway; AMP from ADP: step 1/1.</text>
</comment>
<comment type="subunit">
    <text evidence="1">Monomer.</text>
</comment>
<comment type="subcellular location">
    <subcellularLocation>
        <location evidence="1">Cytoplasm</location>
    </subcellularLocation>
</comment>
<comment type="domain">
    <text evidence="1">Consists of three domains, a large central CORE domain and two small peripheral domains, NMPbind and LID, which undergo movements during catalysis. The LID domain closes over the site of phosphoryl transfer upon ATP binding. Assembling and dissambling the active center during each catalytic cycle provides an effective means to prevent ATP hydrolysis.</text>
</comment>
<comment type="similarity">
    <text evidence="1">Belongs to the adenylate kinase family.</text>
</comment>
<proteinExistence type="inferred from homology"/>
<evidence type="ECO:0000255" key="1">
    <source>
        <dbReference type="HAMAP-Rule" id="MF_00235"/>
    </source>
</evidence>
<gene>
    <name evidence="1" type="primary">adk</name>
    <name type="ordered locus">OEOE_0615</name>
</gene>
<dbReference type="EC" id="2.7.4.3" evidence="1"/>
<dbReference type="EMBL" id="CP000411">
    <property type="protein sequence ID" value="ABJ56557.1"/>
    <property type="molecule type" value="Genomic_DNA"/>
</dbReference>
<dbReference type="RefSeq" id="WP_002818474.1">
    <property type="nucleotide sequence ID" value="NC_008528.1"/>
</dbReference>
<dbReference type="SMR" id="Q04G65"/>
<dbReference type="STRING" id="203123.OEOE_0615"/>
<dbReference type="KEGG" id="ooe:OEOE_0615"/>
<dbReference type="eggNOG" id="COG0563">
    <property type="taxonomic scope" value="Bacteria"/>
</dbReference>
<dbReference type="HOGENOM" id="CLU_032354_1_2_9"/>
<dbReference type="UniPathway" id="UPA00588">
    <property type="reaction ID" value="UER00649"/>
</dbReference>
<dbReference type="Proteomes" id="UP000000774">
    <property type="component" value="Chromosome"/>
</dbReference>
<dbReference type="GO" id="GO:0005737">
    <property type="term" value="C:cytoplasm"/>
    <property type="evidence" value="ECO:0007669"/>
    <property type="project" value="UniProtKB-SubCell"/>
</dbReference>
<dbReference type="GO" id="GO:0004017">
    <property type="term" value="F:adenylate kinase activity"/>
    <property type="evidence" value="ECO:0007669"/>
    <property type="project" value="UniProtKB-UniRule"/>
</dbReference>
<dbReference type="GO" id="GO:0005524">
    <property type="term" value="F:ATP binding"/>
    <property type="evidence" value="ECO:0007669"/>
    <property type="project" value="UniProtKB-UniRule"/>
</dbReference>
<dbReference type="GO" id="GO:0044209">
    <property type="term" value="P:AMP salvage"/>
    <property type="evidence" value="ECO:0007669"/>
    <property type="project" value="UniProtKB-UniRule"/>
</dbReference>
<dbReference type="CDD" id="cd01428">
    <property type="entry name" value="ADK"/>
    <property type="match status" value="1"/>
</dbReference>
<dbReference type="Gene3D" id="3.40.50.300">
    <property type="entry name" value="P-loop containing nucleotide triphosphate hydrolases"/>
    <property type="match status" value="1"/>
</dbReference>
<dbReference type="HAMAP" id="MF_00235">
    <property type="entry name" value="Adenylate_kinase_Adk"/>
    <property type="match status" value="1"/>
</dbReference>
<dbReference type="InterPro" id="IPR000850">
    <property type="entry name" value="Adenylat/UMP-CMP_kin"/>
</dbReference>
<dbReference type="InterPro" id="IPR033690">
    <property type="entry name" value="Adenylat_kinase_CS"/>
</dbReference>
<dbReference type="InterPro" id="IPR027417">
    <property type="entry name" value="P-loop_NTPase"/>
</dbReference>
<dbReference type="NCBIfam" id="NF001381">
    <property type="entry name" value="PRK00279.1-3"/>
    <property type="match status" value="1"/>
</dbReference>
<dbReference type="NCBIfam" id="NF011100">
    <property type="entry name" value="PRK14527.1"/>
    <property type="match status" value="1"/>
</dbReference>
<dbReference type="NCBIfam" id="NF011104">
    <property type="entry name" value="PRK14531.1"/>
    <property type="match status" value="1"/>
</dbReference>
<dbReference type="PANTHER" id="PTHR23359">
    <property type="entry name" value="NUCLEOTIDE KINASE"/>
    <property type="match status" value="1"/>
</dbReference>
<dbReference type="Pfam" id="PF00406">
    <property type="entry name" value="ADK"/>
    <property type="match status" value="1"/>
</dbReference>
<dbReference type="PRINTS" id="PR00094">
    <property type="entry name" value="ADENYLTKNASE"/>
</dbReference>
<dbReference type="SUPFAM" id="SSF52540">
    <property type="entry name" value="P-loop containing nucleoside triphosphate hydrolases"/>
    <property type="match status" value="1"/>
</dbReference>
<dbReference type="PROSITE" id="PS00113">
    <property type="entry name" value="ADENYLATE_KINASE"/>
    <property type="match status" value="1"/>
</dbReference>
<name>KAD_OENOB</name>
<sequence>MSKNIVMLGLPGVGKGTNADIMVEDFKLPHISTGDIFRSAMANHTELGDKAKSFMDAGNLVPDEITNGIVNERLNEADVKDAGGFILDGYPRNTSQADSLESFLRSIQQKLNAVIYLDASEKTVTNRMLGRGREDDTPEVVAHRIDVAKKETMPLVEYYRNKGSLYTIDANGEVSVVYPKIKKLVSNL</sequence>